<organism>
    <name type="scientific">Rhizobium rhizogenes (strain K84 / ATCC BAA-868)</name>
    <name type="common">Agrobacterium radiobacter</name>
    <dbReference type="NCBI Taxonomy" id="311403"/>
    <lineage>
        <taxon>Bacteria</taxon>
        <taxon>Pseudomonadati</taxon>
        <taxon>Pseudomonadota</taxon>
        <taxon>Alphaproteobacteria</taxon>
        <taxon>Hyphomicrobiales</taxon>
        <taxon>Rhizobiaceae</taxon>
        <taxon>Rhizobium/Agrobacterium group</taxon>
        <taxon>Rhizobium</taxon>
    </lineage>
</organism>
<sequence>MNIFRLFGKQRTAPAARERLQLLLAHERSSVGSDLVFLLREEILAVIEKHVQLDRDKVQVKMDCNEHVSTLEIDVEIPLNATVRAA</sequence>
<feature type="chain" id="PRO_1000191266" description="Cell division topological specificity factor">
    <location>
        <begin position="1"/>
        <end position="86"/>
    </location>
</feature>
<proteinExistence type="inferred from homology"/>
<dbReference type="EMBL" id="CP000629">
    <property type="protein sequence ID" value="ACM30029.1"/>
    <property type="molecule type" value="Genomic_DNA"/>
</dbReference>
<dbReference type="RefSeq" id="WP_007691232.1">
    <property type="nucleotide sequence ID" value="NC_011983.1"/>
</dbReference>
<dbReference type="SMR" id="B9JJD7"/>
<dbReference type="STRING" id="311403.Arad_8858"/>
<dbReference type="GeneID" id="86852524"/>
<dbReference type="KEGG" id="ara:Arad_8858"/>
<dbReference type="eggNOG" id="COG0851">
    <property type="taxonomic scope" value="Bacteria"/>
</dbReference>
<dbReference type="HOGENOM" id="CLU_137929_2_0_5"/>
<dbReference type="Proteomes" id="UP000001600">
    <property type="component" value="Chromosome 2"/>
</dbReference>
<dbReference type="GO" id="GO:0051301">
    <property type="term" value="P:cell division"/>
    <property type="evidence" value="ECO:0007669"/>
    <property type="project" value="UniProtKB-KW"/>
</dbReference>
<dbReference type="GO" id="GO:0032955">
    <property type="term" value="P:regulation of division septum assembly"/>
    <property type="evidence" value="ECO:0007669"/>
    <property type="project" value="InterPro"/>
</dbReference>
<dbReference type="Gene3D" id="3.30.1070.10">
    <property type="entry name" value="Cell division topological specificity factor MinE"/>
    <property type="match status" value="1"/>
</dbReference>
<dbReference type="HAMAP" id="MF_00262">
    <property type="entry name" value="MinE"/>
    <property type="match status" value="1"/>
</dbReference>
<dbReference type="InterPro" id="IPR005527">
    <property type="entry name" value="MinE"/>
</dbReference>
<dbReference type="InterPro" id="IPR036707">
    <property type="entry name" value="MinE_sf"/>
</dbReference>
<dbReference type="NCBIfam" id="TIGR01215">
    <property type="entry name" value="minE"/>
    <property type="match status" value="1"/>
</dbReference>
<dbReference type="NCBIfam" id="NF001422">
    <property type="entry name" value="PRK00296.1"/>
    <property type="match status" value="1"/>
</dbReference>
<dbReference type="Pfam" id="PF03776">
    <property type="entry name" value="MinE"/>
    <property type="match status" value="1"/>
</dbReference>
<dbReference type="SUPFAM" id="SSF55229">
    <property type="entry name" value="Cell division protein MinE topological specificity domain"/>
    <property type="match status" value="1"/>
</dbReference>
<gene>
    <name evidence="1" type="primary">minE</name>
    <name type="ordered locus">Arad_8858</name>
</gene>
<keyword id="KW-0131">Cell cycle</keyword>
<keyword id="KW-0132">Cell division</keyword>
<reference key="1">
    <citation type="journal article" date="2009" name="J. Bacteriol.">
        <title>Genome sequences of three Agrobacterium biovars help elucidate the evolution of multichromosome genomes in bacteria.</title>
        <authorList>
            <person name="Slater S.C."/>
            <person name="Goldman B.S."/>
            <person name="Goodner B."/>
            <person name="Setubal J.C."/>
            <person name="Farrand S.K."/>
            <person name="Nester E.W."/>
            <person name="Burr T.J."/>
            <person name="Banta L."/>
            <person name="Dickerman A.W."/>
            <person name="Paulsen I."/>
            <person name="Otten L."/>
            <person name="Suen G."/>
            <person name="Welch R."/>
            <person name="Almeida N.F."/>
            <person name="Arnold F."/>
            <person name="Burton O.T."/>
            <person name="Du Z."/>
            <person name="Ewing A."/>
            <person name="Godsy E."/>
            <person name="Heisel S."/>
            <person name="Houmiel K.L."/>
            <person name="Jhaveri J."/>
            <person name="Lu J."/>
            <person name="Miller N.M."/>
            <person name="Norton S."/>
            <person name="Chen Q."/>
            <person name="Phoolcharoen W."/>
            <person name="Ohlin V."/>
            <person name="Ondrusek D."/>
            <person name="Pride N."/>
            <person name="Stricklin S.L."/>
            <person name="Sun J."/>
            <person name="Wheeler C."/>
            <person name="Wilson L."/>
            <person name="Zhu H."/>
            <person name="Wood D.W."/>
        </authorList>
    </citation>
    <scope>NUCLEOTIDE SEQUENCE [LARGE SCALE GENOMIC DNA]</scope>
    <source>
        <strain>K84 / ATCC BAA-868</strain>
    </source>
</reference>
<name>MINE_RHIR8</name>
<comment type="function">
    <text evidence="1">Prevents the cell division inhibition by proteins MinC and MinD at internal division sites while permitting inhibition at polar sites. This ensures cell division at the proper site by restricting the formation of a division septum at the midpoint of the long axis of the cell.</text>
</comment>
<comment type="similarity">
    <text evidence="1">Belongs to the MinE family.</text>
</comment>
<accession>B9JJD7</accession>
<evidence type="ECO:0000255" key="1">
    <source>
        <dbReference type="HAMAP-Rule" id="MF_00262"/>
    </source>
</evidence>
<protein>
    <recommendedName>
        <fullName evidence="1">Cell division topological specificity factor</fullName>
    </recommendedName>
</protein>